<sequence>MGKKSRVKTQKSGTGATATVSPKEILNLTSELLQKCSSPAPGPGKEWEEYVQIRTLVEKIRKKQKGLSVTFDGKREDYFPDLMKWASENGASVEGFEMVNFKEEGFGLRATRDIKAEELFLWVPRKLLMTVESAKNSVLGPLYSQDRILQAMGNIALAFHLLCERANPNSFWQPYIQTLPSEYDTPLYFEEDEVRYLQSTQAIHDVFSQYKNTARQYAYFYKVIQTHPHANKLPLKDSFTYEDYRWAVSSVMTRQNQIPTEDGSRVTLALIPLWDMCNHTNGLITTGYNLEDDRCECVALQDFRAGEQIYIFYGTRSNAEFVIHSGFFFDNNSHDRVKIKLGVSKSDRLYAMKAEVLARAGIPTSSVFALHFTEPPISAQLLAFLRVFCMTEEELKEHLLGDSAIDRIFTLGNSEFPVSWDNEVKLWTFLEDRASLLLKTYKTTIEEDKSVLKNQDLSVRAKMAIKLRLGEKEILEKAVKSAAVNREFYRQQMEEKAPLPKYEEGNLGLLESSVGDSRLPLVLRNLEEEAGVQDALNIREAISKAQATENGLVNGENSVPNGTRSENENLNQEESKRAVEDAKGSSSDNTAEVKE</sequence>
<proteinExistence type="inferred from homology"/>
<keyword id="KW-0009">Actin-binding</keyword>
<keyword id="KW-0963">Cytoplasm</keyword>
<keyword id="KW-0489">Methyltransferase</keyword>
<keyword id="KW-0539">Nucleus</keyword>
<keyword id="KW-0597">Phosphoprotein</keyword>
<keyword id="KW-1185">Reference proteome</keyword>
<keyword id="KW-0949">S-adenosyl-L-methionine</keyword>
<keyword id="KW-0808">Transferase</keyword>
<keyword id="KW-0832">Ubl conjugation</keyword>
<name>SETD3_PAPAN</name>
<protein>
    <recommendedName>
        <fullName evidence="1">Actin-histidine N-methyltransferase</fullName>
        <ecNumber evidence="1">2.1.1.85</ecNumber>
    </recommendedName>
    <alternativeName>
        <fullName evidence="6">Protein-L-histidine N-tele-methyltransferase</fullName>
    </alternativeName>
    <alternativeName>
        <fullName evidence="6">SET domain-containing protein 3</fullName>
    </alternativeName>
</protein>
<dbReference type="EC" id="2.1.1.85" evidence="1"/>
<dbReference type="EMBL" id="DP000546">
    <property type="protein sequence ID" value="ABY40825.1"/>
    <property type="molecule type" value="Genomic_DNA"/>
</dbReference>
<dbReference type="RefSeq" id="NP_001162549.1">
    <property type="nucleotide sequence ID" value="NM_001169078.1"/>
</dbReference>
<dbReference type="RefSeq" id="XP_017815813.1">
    <property type="nucleotide sequence ID" value="XM_017960324.3"/>
</dbReference>
<dbReference type="SMR" id="A9X1D0"/>
<dbReference type="STRING" id="9555.ENSPANP00000013200"/>
<dbReference type="Ensembl" id="ENSPANT00000008416.3">
    <property type="protein sequence ID" value="ENSPANP00000013200.1"/>
    <property type="gene ID" value="ENSPANG00000021767.3"/>
</dbReference>
<dbReference type="GeneID" id="100137585"/>
<dbReference type="KEGG" id="panu:100137585"/>
<dbReference type="CTD" id="84193"/>
<dbReference type="eggNOG" id="KOG1337">
    <property type="taxonomic scope" value="Eukaryota"/>
</dbReference>
<dbReference type="GeneTree" id="ENSGT00940000153577"/>
<dbReference type="HOGENOM" id="CLU_028272_0_0_1"/>
<dbReference type="OMA" id="QHIDGIF"/>
<dbReference type="Proteomes" id="UP000028761">
    <property type="component" value="Chromosome 7"/>
</dbReference>
<dbReference type="Bgee" id="ENSPANG00000021767">
    <property type="expression patterns" value="Expressed in testis and 68 other cell types or tissues"/>
</dbReference>
<dbReference type="ExpressionAtlas" id="A9X1D0">
    <property type="expression patterns" value="baseline"/>
</dbReference>
<dbReference type="GO" id="GO:0000785">
    <property type="term" value="C:chromatin"/>
    <property type="evidence" value="ECO:0007669"/>
    <property type="project" value="Ensembl"/>
</dbReference>
<dbReference type="GO" id="GO:0005737">
    <property type="term" value="C:cytoplasm"/>
    <property type="evidence" value="ECO:0000250"/>
    <property type="project" value="UniProtKB"/>
</dbReference>
<dbReference type="GO" id="GO:0005634">
    <property type="term" value="C:nucleus"/>
    <property type="evidence" value="ECO:0007669"/>
    <property type="project" value="UniProtKB-SubCell"/>
</dbReference>
<dbReference type="GO" id="GO:0003779">
    <property type="term" value="F:actin binding"/>
    <property type="evidence" value="ECO:0007669"/>
    <property type="project" value="UniProtKB-KW"/>
</dbReference>
<dbReference type="GO" id="GO:0046975">
    <property type="term" value="F:histone H3K36 methyltransferase activity"/>
    <property type="evidence" value="ECO:0000250"/>
    <property type="project" value="UniProtKB"/>
</dbReference>
<dbReference type="GO" id="GO:0042800">
    <property type="term" value="F:histone H3K4 methyltransferase activity"/>
    <property type="evidence" value="ECO:0007669"/>
    <property type="project" value="Ensembl"/>
</dbReference>
<dbReference type="GO" id="GO:0018064">
    <property type="term" value="F:protein-L-histidine N-tele-methyltransferase activity"/>
    <property type="evidence" value="ECO:0000250"/>
    <property type="project" value="UniProtKB"/>
</dbReference>
<dbReference type="GO" id="GO:0061629">
    <property type="term" value="F:RNA polymerase II-specific DNA-binding transcription factor binding"/>
    <property type="evidence" value="ECO:0007669"/>
    <property type="project" value="Ensembl"/>
</dbReference>
<dbReference type="GO" id="GO:0003713">
    <property type="term" value="F:transcription coactivator activity"/>
    <property type="evidence" value="ECO:0000250"/>
    <property type="project" value="UniProtKB"/>
</dbReference>
<dbReference type="GO" id="GO:0030047">
    <property type="term" value="P:actin modification"/>
    <property type="evidence" value="ECO:0000250"/>
    <property type="project" value="UniProtKB"/>
</dbReference>
<dbReference type="GO" id="GO:0018021">
    <property type="term" value="P:peptidyl-histidine methylation"/>
    <property type="evidence" value="ECO:0000250"/>
    <property type="project" value="UniProtKB"/>
</dbReference>
<dbReference type="GO" id="GO:0045893">
    <property type="term" value="P:positive regulation of DNA-templated transcription"/>
    <property type="evidence" value="ECO:0000250"/>
    <property type="project" value="UniProtKB"/>
</dbReference>
<dbReference type="GO" id="GO:0051149">
    <property type="term" value="P:positive regulation of muscle cell differentiation"/>
    <property type="evidence" value="ECO:0007669"/>
    <property type="project" value="Ensembl"/>
</dbReference>
<dbReference type="GO" id="GO:0045944">
    <property type="term" value="P:positive regulation of transcription by RNA polymerase II"/>
    <property type="evidence" value="ECO:0007669"/>
    <property type="project" value="Ensembl"/>
</dbReference>
<dbReference type="GO" id="GO:0070472">
    <property type="term" value="P:regulation of uterine smooth muscle contraction"/>
    <property type="evidence" value="ECO:0000250"/>
    <property type="project" value="UniProtKB"/>
</dbReference>
<dbReference type="CDD" id="cd19176">
    <property type="entry name" value="SET_SETD3"/>
    <property type="match status" value="1"/>
</dbReference>
<dbReference type="FunFam" id="3.90.1410.10:FF:000001">
    <property type="entry name" value="histone-lysine N-methyltransferase setd3 isoform X1"/>
    <property type="match status" value="1"/>
</dbReference>
<dbReference type="FunFam" id="3.90.1420.10:FF:000001">
    <property type="entry name" value="histone-lysine N-methyltransferase setd3 isoform X1"/>
    <property type="match status" value="1"/>
</dbReference>
<dbReference type="Gene3D" id="3.90.1420.10">
    <property type="entry name" value="Rubisco LSMT, substrate-binding domain"/>
    <property type="match status" value="1"/>
</dbReference>
<dbReference type="Gene3D" id="3.90.1410.10">
    <property type="entry name" value="set domain protein methyltransferase, domain 1"/>
    <property type="match status" value="1"/>
</dbReference>
<dbReference type="InterPro" id="IPR015353">
    <property type="entry name" value="Rubisco_LSMT_subst-bd"/>
</dbReference>
<dbReference type="InterPro" id="IPR036464">
    <property type="entry name" value="Rubisco_LSMT_subst-bd_sf"/>
</dbReference>
<dbReference type="InterPro" id="IPR001214">
    <property type="entry name" value="SET_dom"/>
</dbReference>
<dbReference type="InterPro" id="IPR046341">
    <property type="entry name" value="SET_dom_sf"/>
</dbReference>
<dbReference type="InterPro" id="IPR025785">
    <property type="entry name" value="SETD3"/>
</dbReference>
<dbReference type="InterPro" id="IPR044428">
    <property type="entry name" value="SETD3_SET"/>
</dbReference>
<dbReference type="InterPro" id="IPR050600">
    <property type="entry name" value="SETD3_SETD6_MTase"/>
</dbReference>
<dbReference type="PANTHER" id="PTHR13271:SF47">
    <property type="entry name" value="ACTIN-HISTIDINE N-METHYLTRANSFERASE"/>
    <property type="match status" value="1"/>
</dbReference>
<dbReference type="PANTHER" id="PTHR13271">
    <property type="entry name" value="UNCHARACTERIZED PUTATIVE METHYLTRANSFERASE"/>
    <property type="match status" value="1"/>
</dbReference>
<dbReference type="Pfam" id="PF09273">
    <property type="entry name" value="Rubis-subs-bind"/>
    <property type="match status" value="1"/>
</dbReference>
<dbReference type="Pfam" id="PF00856">
    <property type="entry name" value="SET"/>
    <property type="match status" value="1"/>
</dbReference>
<dbReference type="SUPFAM" id="SSF81822">
    <property type="entry name" value="RuBisCo LSMT C-terminal, substrate-binding domain"/>
    <property type="match status" value="1"/>
</dbReference>
<dbReference type="SUPFAM" id="SSF82199">
    <property type="entry name" value="SET domain"/>
    <property type="match status" value="1"/>
</dbReference>
<dbReference type="PROSITE" id="PS51565">
    <property type="entry name" value="SAM_MT85_SETD3"/>
    <property type="match status" value="1"/>
</dbReference>
<dbReference type="PROSITE" id="PS50280">
    <property type="entry name" value="SET"/>
    <property type="match status" value="1"/>
</dbReference>
<reference key="1">
    <citation type="submission" date="2007-12" db="EMBL/GenBank/DDBJ databases">
        <title>NISC comparative sequencing initiative.</title>
        <authorList>
            <person name="Antonellis A."/>
            <person name="Ayele K."/>
            <person name="Benjamin B."/>
            <person name="Blakesley R.W."/>
            <person name="Boakye A."/>
            <person name="Bouffard G.G."/>
            <person name="Brinkley C."/>
            <person name="Brooks S."/>
            <person name="Chu G."/>
            <person name="Coleman H."/>
            <person name="Engle J."/>
            <person name="Gestole M."/>
            <person name="Greene A."/>
            <person name="Guan X."/>
            <person name="Gupta J."/>
            <person name="Haghighi P."/>
            <person name="Han J."/>
            <person name="Hansen N."/>
            <person name="Ho S.-L."/>
            <person name="Hu P."/>
            <person name="Hunter G."/>
            <person name="Hurle B."/>
            <person name="Idol J.R."/>
            <person name="Kwong P."/>
            <person name="Laric P."/>
            <person name="Larson S."/>
            <person name="Lee-Lin S.-Q."/>
            <person name="Legaspi R."/>
            <person name="Madden M."/>
            <person name="Maduro Q.L."/>
            <person name="Maduro V.B."/>
            <person name="Margulies E.H."/>
            <person name="Masiello C."/>
            <person name="Maskeri B."/>
            <person name="McDowell J."/>
            <person name="Mojidi H.A."/>
            <person name="Mullikin J.C."/>
            <person name="Oestreicher J.S."/>
            <person name="Park M."/>
            <person name="Portnoy M.E."/>
            <person name="Prasad A."/>
            <person name="Puri O."/>
            <person name="Reddix-Dugue N."/>
            <person name="Schandler K."/>
            <person name="Schueler M.G."/>
            <person name="Sison C."/>
            <person name="Stantripop S."/>
            <person name="Stephen E."/>
            <person name="Taye A."/>
            <person name="Thomas J.W."/>
            <person name="Thomas P.J."/>
            <person name="Tsipouri V."/>
            <person name="Ung L."/>
            <person name="Vogt J.L."/>
            <person name="Wetherby K.D."/>
            <person name="Young A."/>
            <person name="Green E.D."/>
        </authorList>
    </citation>
    <scope>NUCLEOTIDE SEQUENCE [LARGE SCALE GENOMIC DNA]</scope>
</reference>
<accession>A9X1D0</accession>
<gene>
    <name evidence="1" type="primary">SETD3</name>
</gene>
<feature type="chain" id="PRO_0000408341" description="Actin-histidine N-methyltransferase">
    <location>
        <begin position="1"/>
        <end position="595"/>
    </location>
</feature>
<feature type="domain" description="SET" evidence="3">
    <location>
        <begin position="94"/>
        <end position="314"/>
    </location>
</feature>
<feature type="region of interest" description="Disordered" evidence="5">
    <location>
        <begin position="1"/>
        <end position="22"/>
    </location>
</feature>
<feature type="region of interest" description="Disordered" evidence="5">
    <location>
        <begin position="549"/>
        <end position="595"/>
    </location>
</feature>
<feature type="compositionally biased region" description="Polar residues" evidence="5">
    <location>
        <begin position="10"/>
        <end position="20"/>
    </location>
</feature>
<feature type="compositionally biased region" description="Polar residues" evidence="5">
    <location>
        <begin position="549"/>
        <end position="572"/>
    </location>
</feature>
<feature type="compositionally biased region" description="Basic and acidic residues" evidence="5">
    <location>
        <begin position="573"/>
        <end position="583"/>
    </location>
</feature>
<feature type="compositionally biased region" description="Polar residues" evidence="5">
    <location>
        <begin position="584"/>
        <end position="595"/>
    </location>
</feature>
<feature type="binding site" evidence="1">
    <location>
        <position position="75"/>
    </location>
    <ligand>
        <name>S-adenosyl-L-methionine</name>
        <dbReference type="ChEBI" id="CHEBI:59789"/>
    </ligand>
</feature>
<feature type="binding site" evidence="1">
    <location>
        <begin position="104"/>
        <end position="106"/>
    </location>
    <ligand>
        <name>S-adenosyl-L-methionine</name>
        <dbReference type="ChEBI" id="CHEBI:59789"/>
    </ligand>
</feature>
<feature type="binding site" evidence="1">
    <location>
        <position position="254"/>
    </location>
    <ligand>
        <name>S-adenosyl-L-methionine</name>
        <dbReference type="ChEBI" id="CHEBI:59789"/>
    </ligand>
</feature>
<feature type="binding site" evidence="1">
    <location>
        <begin position="275"/>
        <end position="279"/>
    </location>
    <ligand>
        <name>S-adenosyl-L-methionine</name>
        <dbReference type="ChEBI" id="CHEBI:59789"/>
    </ligand>
</feature>
<feature type="binding site" evidence="1">
    <location>
        <begin position="325"/>
        <end position="327"/>
    </location>
    <ligand>
        <name>S-adenosyl-L-methionine</name>
        <dbReference type="ChEBI" id="CHEBI:59789"/>
    </ligand>
</feature>
<feature type="modified residue" description="Phosphoserine" evidence="1">
    <location>
        <position position="513"/>
    </location>
</feature>
<organism>
    <name type="scientific">Papio anubis</name>
    <name type="common">Olive baboon</name>
    <dbReference type="NCBI Taxonomy" id="9555"/>
    <lineage>
        <taxon>Eukaryota</taxon>
        <taxon>Metazoa</taxon>
        <taxon>Chordata</taxon>
        <taxon>Craniata</taxon>
        <taxon>Vertebrata</taxon>
        <taxon>Euteleostomi</taxon>
        <taxon>Mammalia</taxon>
        <taxon>Eutheria</taxon>
        <taxon>Euarchontoglires</taxon>
        <taxon>Primates</taxon>
        <taxon>Haplorrhini</taxon>
        <taxon>Catarrhini</taxon>
        <taxon>Cercopithecidae</taxon>
        <taxon>Cercopithecinae</taxon>
        <taxon>Papio</taxon>
    </lineage>
</organism>
<comment type="function">
    <text evidence="1">Protein-histidine N-methyltransferase that specifically mediates 3-methylhistidine (tele-methylhistidine) methylation of actin at 'His-73'. Histidine methylation of actin is required for smooth muscle contraction of the laboring uterus during delivery. Does not have protein-lysine N-methyltransferase activity and probably only catalyzes histidine methylation of actin.</text>
</comment>
<comment type="catalytic activity">
    <reaction evidence="1">
        <text>L-histidyl-[protein] + S-adenosyl-L-methionine = N(tele)-methyl-L-histidyl-[protein] + S-adenosyl-L-homocysteine + H(+)</text>
        <dbReference type="Rhea" id="RHEA:19369"/>
        <dbReference type="Rhea" id="RHEA-COMP:9745"/>
        <dbReference type="Rhea" id="RHEA-COMP:11600"/>
        <dbReference type="ChEBI" id="CHEBI:15378"/>
        <dbReference type="ChEBI" id="CHEBI:16367"/>
        <dbReference type="ChEBI" id="CHEBI:29979"/>
        <dbReference type="ChEBI" id="CHEBI:57856"/>
        <dbReference type="ChEBI" id="CHEBI:59789"/>
        <dbReference type="EC" id="2.1.1.85"/>
    </reaction>
</comment>
<comment type="subunit">
    <text evidence="2">Interacts with MYOD1.</text>
</comment>
<comment type="subcellular location">
    <subcellularLocation>
        <location evidence="1">Cytoplasm</location>
    </subcellularLocation>
    <subcellularLocation>
        <location evidence="1">Nucleus</location>
    </subcellularLocation>
    <text evidence="1">Localizes mainly in the cytoplasm.</text>
</comment>
<comment type="domain">
    <text evidence="1">The SET domain specifically recognizes and binds actin, suggesting that it does not accommodate substrates diverging from actin.</text>
</comment>
<comment type="PTM">
    <text evidence="1">Phosphorylated by GSK3B, which is required for recognition by the SCF(FBXW7) complex and subsequent degradation.</text>
</comment>
<comment type="PTM">
    <text evidence="1">Ubiquitinated by the SCF(FBXW7) complex following phosphorylation by GSK3B, leading to its degradation by the proteasome.</text>
</comment>
<comment type="similarity">
    <text evidence="4">Belongs to the class V-like SAM-binding methyltransferase superfamily. SETD3 actin-histidine methyltransferase family.</text>
</comment>
<evidence type="ECO:0000250" key="1">
    <source>
        <dbReference type="UniProtKB" id="Q86TU7"/>
    </source>
</evidence>
<evidence type="ECO:0000250" key="2">
    <source>
        <dbReference type="UniProtKB" id="Q91WC0"/>
    </source>
</evidence>
<evidence type="ECO:0000255" key="3">
    <source>
        <dbReference type="PROSITE-ProRule" id="PRU00190"/>
    </source>
</evidence>
<evidence type="ECO:0000255" key="4">
    <source>
        <dbReference type="PROSITE-ProRule" id="PRU00898"/>
    </source>
</evidence>
<evidence type="ECO:0000256" key="5">
    <source>
        <dbReference type="SAM" id="MobiDB-lite"/>
    </source>
</evidence>
<evidence type="ECO:0000305" key="6"/>